<protein>
    <recommendedName>
        <fullName evidence="1">Nickel-responsive regulator</fullName>
    </recommendedName>
</protein>
<feature type="chain" id="PRO_1000081261" description="Nickel-responsive regulator">
    <location>
        <begin position="1"/>
        <end position="133"/>
    </location>
</feature>
<feature type="binding site" evidence="1">
    <location>
        <position position="76"/>
    </location>
    <ligand>
        <name>Ni(2+)</name>
        <dbReference type="ChEBI" id="CHEBI:49786"/>
    </ligand>
</feature>
<feature type="binding site" evidence="1">
    <location>
        <position position="87"/>
    </location>
    <ligand>
        <name>Ni(2+)</name>
        <dbReference type="ChEBI" id="CHEBI:49786"/>
    </ligand>
</feature>
<feature type="binding site" evidence="1">
    <location>
        <position position="89"/>
    </location>
    <ligand>
        <name>Ni(2+)</name>
        <dbReference type="ChEBI" id="CHEBI:49786"/>
    </ligand>
</feature>
<feature type="binding site" evidence="1">
    <location>
        <position position="95"/>
    </location>
    <ligand>
        <name>Ni(2+)</name>
        <dbReference type="ChEBI" id="CHEBI:49786"/>
    </ligand>
</feature>
<dbReference type="EMBL" id="CP000880">
    <property type="protein sequence ID" value="ABX23845.1"/>
    <property type="molecule type" value="Genomic_DNA"/>
</dbReference>
<dbReference type="SMR" id="A9MM66"/>
<dbReference type="STRING" id="41514.SARI_04052"/>
<dbReference type="KEGG" id="ses:SARI_04052"/>
<dbReference type="HOGENOM" id="CLU_113319_1_4_6"/>
<dbReference type="Proteomes" id="UP000002084">
    <property type="component" value="Chromosome"/>
</dbReference>
<dbReference type="GO" id="GO:0003700">
    <property type="term" value="F:DNA-binding transcription factor activity"/>
    <property type="evidence" value="ECO:0007669"/>
    <property type="project" value="UniProtKB-UniRule"/>
</dbReference>
<dbReference type="GO" id="GO:0016151">
    <property type="term" value="F:nickel cation binding"/>
    <property type="evidence" value="ECO:0007669"/>
    <property type="project" value="UniProtKB-UniRule"/>
</dbReference>
<dbReference type="GO" id="GO:0043565">
    <property type="term" value="F:sequence-specific DNA binding"/>
    <property type="evidence" value="ECO:0007669"/>
    <property type="project" value="UniProtKB-ARBA"/>
</dbReference>
<dbReference type="GO" id="GO:0010045">
    <property type="term" value="P:response to nickel cation"/>
    <property type="evidence" value="ECO:0007669"/>
    <property type="project" value="InterPro"/>
</dbReference>
<dbReference type="CDD" id="cd22231">
    <property type="entry name" value="RHH_NikR_HicB-like"/>
    <property type="match status" value="1"/>
</dbReference>
<dbReference type="FunFam" id="1.10.1220.10:FF:000001">
    <property type="entry name" value="Nickel-responsive regulator"/>
    <property type="match status" value="1"/>
</dbReference>
<dbReference type="FunFam" id="3.30.70.1150:FF:000002">
    <property type="entry name" value="Nickel-responsive regulator"/>
    <property type="match status" value="1"/>
</dbReference>
<dbReference type="Gene3D" id="3.30.70.1150">
    <property type="entry name" value="ACT-like. Chain A, domain 2"/>
    <property type="match status" value="1"/>
</dbReference>
<dbReference type="Gene3D" id="1.10.1220.10">
    <property type="entry name" value="Met repressor-like"/>
    <property type="match status" value="1"/>
</dbReference>
<dbReference type="HAMAP" id="MF_00476">
    <property type="entry name" value="NikR"/>
    <property type="match status" value="1"/>
</dbReference>
<dbReference type="InterPro" id="IPR027271">
    <property type="entry name" value="Acetolactate_synth/TF_NikR_C"/>
</dbReference>
<dbReference type="InterPro" id="IPR045865">
    <property type="entry name" value="ACT-like_dom_sf"/>
</dbReference>
<dbReference type="InterPro" id="IPR013321">
    <property type="entry name" value="Arc_rbn_hlx_hlx"/>
</dbReference>
<dbReference type="InterPro" id="IPR002145">
    <property type="entry name" value="CopG"/>
</dbReference>
<dbReference type="InterPro" id="IPR050192">
    <property type="entry name" value="CopG/NikR_regulator"/>
</dbReference>
<dbReference type="InterPro" id="IPR022988">
    <property type="entry name" value="Ni_resp_reg_NikR"/>
</dbReference>
<dbReference type="InterPro" id="IPR014160">
    <property type="entry name" value="Nickel_NikR_proteobac"/>
</dbReference>
<dbReference type="InterPro" id="IPR010985">
    <property type="entry name" value="Ribbon_hlx_hlx"/>
</dbReference>
<dbReference type="InterPro" id="IPR014864">
    <property type="entry name" value="TF_NikR_Ni-bd_C"/>
</dbReference>
<dbReference type="NCBIfam" id="TIGR02793">
    <property type="entry name" value="nikR"/>
    <property type="match status" value="1"/>
</dbReference>
<dbReference type="NCBIfam" id="NF002815">
    <property type="entry name" value="PRK02967.1"/>
    <property type="match status" value="1"/>
</dbReference>
<dbReference type="NCBIfam" id="NF003381">
    <property type="entry name" value="PRK04460.1"/>
    <property type="match status" value="1"/>
</dbReference>
<dbReference type="PANTHER" id="PTHR34719">
    <property type="entry name" value="NICKEL-RESPONSIVE REGULATOR"/>
    <property type="match status" value="1"/>
</dbReference>
<dbReference type="PANTHER" id="PTHR34719:SF2">
    <property type="entry name" value="NICKEL-RESPONSIVE REGULATOR"/>
    <property type="match status" value="1"/>
</dbReference>
<dbReference type="Pfam" id="PF08753">
    <property type="entry name" value="NikR_C"/>
    <property type="match status" value="1"/>
</dbReference>
<dbReference type="Pfam" id="PF01402">
    <property type="entry name" value="RHH_1"/>
    <property type="match status" value="1"/>
</dbReference>
<dbReference type="SUPFAM" id="SSF55021">
    <property type="entry name" value="ACT-like"/>
    <property type="match status" value="1"/>
</dbReference>
<dbReference type="SUPFAM" id="SSF47598">
    <property type="entry name" value="Ribbon-helix-helix"/>
    <property type="match status" value="1"/>
</dbReference>
<accession>A9MM66</accession>
<gene>
    <name evidence="1" type="primary">nikR</name>
    <name type="ordered locus">SARI_04052</name>
</gene>
<sequence length="133" mass="15114">MQRVTITLDDDLLETLDSLSQRRGYNNRSEAIRDILRGALAQEATQEHGTYGFAVLSYVYEHEKRDLASRIVSTQHHHHELSVATLHVHINHDDCLEIAVLKGDMGDVQHFADDVIAQRGVRHGHLQCLPKED</sequence>
<reference key="1">
    <citation type="submission" date="2007-11" db="EMBL/GenBank/DDBJ databases">
        <authorList>
            <consortium name="The Salmonella enterica serovar Arizonae Genome Sequencing Project"/>
            <person name="McClelland M."/>
            <person name="Sanderson E.K."/>
            <person name="Porwollik S."/>
            <person name="Spieth J."/>
            <person name="Clifton W.S."/>
            <person name="Fulton R."/>
            <person name="Chunyan W."/>
            <person name="Wollam A."/>
            <person name="Shah N."/>
            <person name="Pepin K."/>
            <person name="Bhonagiri V."/>
            <person name="Nash W."/>
            <person name="Johnson M."/>
            <person name="Thiruvilangam P."/>
            <person name="Wilson R."/>
        </authorList>
    </citation>
    <scope>NUCLEOTIDE SEQUENCE [LARGE SCALE GENOMIC DNA]</scope>
    <source>
        <strain>ATCC BAA-731 / CDC346-86 / RSK2980</strain>
    </source>
</reference>
<comment type="function">
    <text evidence="1">Transcriptional repressor of the nikABCDE operon. Is active in the presence of excessive concentrations of intracellular nickel.</text>
</comment>
<comment type="cofactor">
    <cofactor evidence="1">
        <name>Ni(2+)</name>
        <dbReference type="ChEBI" id="CHEBI:49786"/>
    </cofactor>
    <text evidence="1">Binds 1 nickel ion per subunit.</text>
</comment>
<comment type="subunit">
    <text evidence="1">Homotetramer.</text>
</comment>
<comment type="similarity">
    <text evidence="1">Belongs to the transcriptional regulatory CopG/NikR family.</text>
</comment>
<keyword id="KW-0238">DNA-binding</keyword>
<keyword id="KW-0479">Metal-binding</keyword>
<keyword id="KW-0533">Nickel</keyword>
<keyword id="KW-1185">Reference proteome</keyword>
<keyword id="KW-0678">Repressor</keyword>
<keyword id="KW-0804">Transcription</keyword>
<keyword id="KW-0805">Transcription regulation</keyword>
<organism>
    <name type="scientific">Salmonella arizonae (strain ATCC BAA-731 / CDC346-86 / RSK2980)</name>
    <dbReference type="NCBI Taxonomy" id="41514"/>
    <lineage>
        <taxon>Bacteria</taxon>
        <taxon>Pseudomonadati</taxon>
        <taxon>Pseudomonadota</taxon>
        <taxon>Gammaproteobacteria</taxon>
        <taxon>Enterobacterales</taxon>
        <taxon>Enterobacteriaceae</taxon>
        <taxon>Salmonella</taxon>
    </lineage>
</organism>
<name>NIKR_SALAR</name>
<proteinExistence type="inferred from homology"/>
<evidence type="ECO:0000255" key="1">
    <source>
        <dbReference type="HAMAP-Rule" id="MF_00476"/>
    </source>
</evidence>